<name>MK09_CHICK</name>
<feature type="chain" id="PRO_0000186276" description="Mitogen-activated protein kinase 9">
    <location>
        <begin position="1"/>
        <end position="382"/>
    </location>
</feature>
<feature type="domain" description="Protein kinase" evidence="4">
    <location>
        <begin position="26"/>
        <end position="321"/>
    </location>
</feature>
<feature type="short sequence motif" description="TXY">
    <location>
        <begin position="183"/>
        <end position="185"/>
    </location>
</feature>
<feature type="active site" description="Proton acceptor" evidence="4 5">
    <location>
        <position position="151"/>
    </location>
</feature>
<feature type="binding site" evidence="4">
    <location>
        <begin position="33"/>
        <end position="38"/>
    </location>
    <ligand>
        <name>ATP</name>
        <dbReference type="ChEBI" id="CHEBI:30616"/>
    </ligand>
</feature>
<feature type="binding site" evidence="4">
    <location>
        <position position="55"/>
    </location>
    <ligand>
        <name>ATP</name>
        <dbReference type="ChEBI" id="CHEBI:30616"/>
    </ligand>
</feature>
<feature type="modified residue" description="Phosphothreonine" evidence="1">
    <location>
        <position position="183"/>
    </location>
</feature>
<feature type="modified residue" description="Phosphotyrosine" evidence="1">
    <location>
        <position position="185"/>
    </location>
</feature>
<accession>P79996</accession>
<sequence>MSDSKCDSQFYSVQVADSTFTVLKRYQQLKPIGSGAQGIVCAAFDTVLGINVAVKKLSRPFQNQTHAKRAYRELVLLKCVNHKNIISLLNVFTPQKSLEEFQDVYLVMELMDANLCQVIHMELDHERMSYLLYQMLCGIKHLHSAGIIHRDLKPSNIVVKSDCTLKILDFGLARTACTNFMMTPYVVTRYYRAPEVILGMGYKENVDIWSVGCIMGELVKGCVIFQGTDHIDQWNKVIEQLGTPSAEFMKKLQPTVRNYVENRPKYPGIKFEELFPDWIFPSESDRDKLKTSQARDLLSKMLVVDPDKRISVDEALRHPYITVWYDPAEAEAPPPQIYDAQLEEREHAIEEWKELIYKEVMDWEERSKNGVVKDQPSAQMQQ</sequence>
<proteinExistence type="evidence at transcript level"/>
<protein>
    <recommendedName>
        <fullName>Mitogen-activated protein kinase 9</fullName>
        <shortName>MAP kinase 9</shortName>
        <shortName>MAPK 9</shortName>
        <ecNumber>2.7.11.24</ecNumber>
    </recommendedName>
    <alternativeName>
        <fullName>Stress-activated protein kinase JNK2</fullName>
    </alternativeName>
    <alternativeName>
        <fullName>c-Jun N-terminal kinase 2</fullName>
    </alternativeName>
</protein>
<dbReference type="EC" id="2.7.11.24"/>
<dbReference type="EMBL" id="AB000807">
    <property type="protein sequence ID" value="BAA19188.1"/>
    <property type="molecule type" value="mRNA"/>
</dbReference>
<dbReference type="PIR" id="JC5531">
    <property type="entry name" value="JC5531"/>
</dbReference>
<dbReference type="RefSeq" id="NP_001383759.1">
    <property type="nucleotide sequence ID" value="NM_001396830.1"/>
</dbReference>
<dbReference type="RefSeq" id="NP_990426.1">
    <property type="nucleotide sequence ID" value="NM_205095.2"/>
</dbReference>
<dbReference type="RefSeq" id="XP_046756260.1">
    <property type="nucleotide sequence ID" value="XM_046900304.1"/>
</dbReference>
<dbReference type="RefSeq" id="XP_046756261.1">
    <property type="nucleotide sequence ID" value="XM_046900305.1"/>
</dbReference>
<dbReference type="RefSeq" id="XP_046782814.1">
    <property type="nucleotide sequence ID" value="XM_046926858.1"/>
</dbReference>
<dbReference type="RefSeq" id="XP_046782815.1">
    <property type="nucleotide sequence ID" value="XM_046926859.1"/>
</dbReference>
<dbReference type="SMR" id="P79996"/>
<dbReference type="FunCoup" id="P79996">
    <property type="interactions" value="1671"/>
</dbReference>
<dbReference type="STRING" id="9031.ENSGALP00000072370"/>
<dbReference type="PaxDb" id="9031-ENSGALP00000022313"/>
<dbReference type="Ensembl" id="ENSGALT00010036574.1">
    <property type="protein sequence ID" value="ENSGALP00010021320.1"/>
    <property type="gene ID" value="ENSGALG00010015175.1"/>
</dbReference>
<dbReference type="GeneID" id="395983"/>
<dbReference type="KEGG" id="gga:395983"/>
<dbReference type="CTD" id="5601"/>
<dbReference type="VEuPathDB" id="HostDB:geneid_395983"/>
<dbReference type="eggNOG" id="KOG0665">
    <property type="taxonomic scope" value="Eukaryota"/>
</dbReference>
<dbReference type="GeneTree" id="ENSGT00940000158327"/>
<dbReference type="HOGENOM" id="CLU_000288_181_1_1"/>
<dbReference type="InParanoid" id="P79996"/>
<dbReference type="OrthoDB" id="192887at2759"/>
<dbReference type="PhylomeDB" id="P79996"/>
<dbReference type="TreeFam" id="TF105100"/>
<dbReference type="Reactome" id="R-GGA-2559580">
    <property type="pathway name" value="Oxidative Stress Induced Senescence"/>
</dbReference>
<dbReference type="Reactome" id="R-GGA-2871796">
    <property type="pathway name" value="FCERI mediated MAPK activation"/>
</dbReference>
<dbReference type="Reactome" id="R-GGA-437986">
    <property type="pathway name" value="Activated TAK1 mediates Jun kinases (JNK) phosphorylation and activation"/>
</dbReference>
<dbReference type="Reactome" id="R-GGA-450321">
    <property type="pathway name" value="JNK (c-Jun kinases) phosphorylation and activation mediated by activated human TAK1"/>
</dbReference>
<dbReference type="Reactome" id="R-GGA-450341">
    <property type="pathway name" value="Activation of the AP-1 family of transcription factors"/>
</dbReference>
<dbReference type="PRO" id="PR:P79996"/>
<dbReference type="Proteomes" id="UP000000539">
    <property type="component" value="Chromosome 13"/>
</dbReference>
<dbReference type="Bgee" id="ENSGALG00000039099">
    <property type="expression patterns" value="Expressed in skeletal muscle tissue and 12 other cell types or tissues"/>
</dbReference>
<dbReference type="GO" id="GO:0005737">
    <property type="term" value="C:cytoplasm"/>
    <property type="evidence" value="ECO:0000318"/>
    <property type="project" value="GO_Central"/>
</dbReference>
<dbReference type="GO" id="GO:0005634">
    <property type="term" value="C:nucleus"/>
    <property type="evidence" value="ECO:0000318"/>
    <property type="project" value="GO_Central"/>
</dbReference>
<dbReference type="GO" id="GO:0005524">
    <property type="term" value="F:ATP binding"/>
    <property type="evidence" value="ECO:0007669"/>
    <property type="project" value="UniProtKB-KW"/>
</dbReference>
<dbReference type="GO" id="GO:0004705">
    <property type="term" value="F:JUN kinase activity"/>
    <property type="evidence" value="ECO:0000318"/>
    <property type="project" value="GO_Central"/>
</dbReference>
<dbReference type="GO" id="GO:0106310">
    <property type="term" value="F:protein serine kinase activity"/>
    <property type="evidence" value="ECO:0007669"/>
    <property type="project" value="RHEA"/>
</dbReference>
<dbReference type="GO" id="GO:0009792">
    <property type="term" value="P:embryo development ending in birth or egg hatching"/>
    <property type="evidence" value="ECO:0000314"/>
    <property type="project" value="UniProtKB"/>
</dbReference>
<dbReference type="GO" id="GO:0007254">
    <property type="term" value="P:JNK cascade"/>
    <property type="evidence" value="ECO:0000250"/>
    <property type="project" value="UniProtKB"/>
</dbReference>
<dbReference type="GO" id="GO:0048511">
    <property type="term" value="P:rhythmic process"/>
    <property type="evidence" value="ECO:0007669"/>
    <property type="project" value="UniProtKB-KW"/>
</dbReference>
<dbReference type="CDD" id="cd07850">
    <property type="entry name" value="STKc_JNK"/>
    <property type="match status" value="1"/>
</dbReference>
<dbReference type="FunFam" id="1.10.510.10:FF:000009">
    <property type="entry name" value="Mitogen-activated protein kinase"/>
    <property type="match status" value="1"/>
</dbReference>
<dbReference type="FunFam" id="3.30.200.20:FF:000210">
    <property type="entry name" value="Mitogen-activated protein kinase"/>
    <property type="match status" value="1"/>
</dbReference>
<dbReference type="Gene3D" id="3.30.200.20">
    <property type="entry name" value="Phosphorylase Kinase, domain 1"/>
    <property type="match status" value="1"/>
</dbReference>
<dbReference type="Gene3D" id="1.10.510.10">
    <property type="entry name" value="Transferase(Phosphotransferase) domain 1"/>
    <property type="match status" value="1"/>
</dbReference>
<dbReference type="InterPro" id="IPR011009">
    <property type="entry name" value="Kinase-like_dom_sf"/>
</dbReference>
<dbReference type="InterPro" id="IPR050117">
    <property type="entry name" value="MAP_kinase"/>
</dbReference>
<dbReference type="InterPro" id="IPR003527">
    <property type="entry name" value="MAP_kinase_CS"/>
</dbReference>
<dbReference type="InterPro" id="IPR008351">
    <property type="entry name" value="MAPK_JNK"/>
</dbReference>
<dbReference type="InterPro" id="IPR000719">
    <property type="entry name" value="Prot_kinase_dom"/>
</dbReference>
<dbReference type="InterPro" id="IPR008271">
    <property type="entry name" value="Ser/Thr_kinase_AS"/>
</dbReference>
<dbReference type="PANTHER" id="PTHR24055">
    <property type="entry name" value="MITOGEN-ACTIVATED PROTEIN KINASE"/>
    <property type="match status" value="1"/>
</dbReference>
<dbReference type="Pfam" id="PF00069">
    <property type="entry name" value="Pkinase"/>
    <property type="match status" value="1"/>
</dbReference>
<dbReference type="PRINTS" id="PR01772">
    <property type="entry name" value="JNKMAPKINASE"/>
</dbReference>
<dbReference type="SMART" id="SM00220">
    <property type="entry name" value="S_TKc"/>
    <property type="match status" value="1"/>
</dbReference>
<dbReference type="SUPFAM" id="SSF56112">
    <property type="entry name" value="Protein kinase-like (PK-like)"/>
    <property type="match status" value="1"/>
</dbReference>
<dbReference type="PROSITE" id="PS01351">
    <property type="entry name" value="MAPK"/>
    <property type="match status" value="1"/>
</dbReference>
<dbReference type="PROSITE" id="PS50011">
    <property type="entry name" value="PROTEIN_KINASE_DOM"/>
    <property type="match status" value="1"/>
</dbReference>
<dbReference type="PROSITE" id="PS00108">
    <property type="entry name" value="PROTEIN_KINASE_ST"/>
    <property type="match status" value="1"/>
</dbReference>
<keyword id="KW-0067">ATP-binding</keyword>
<keyword id="KW-0090">Biological rhythms</keyword>
<keyword id="KW-0418">Kinase</keyword>
<keyword id="KW-0547">Nucleotide-binding</keyword>
<keyword id="KW-0597">Phosphoprotein</keyword>
<keyword id="KW-1185">Reference proteome</keyword>
<keyword id="KW-0723">Serine/threonine-protein kinase</keyword>
<keyword id="KW-0808">Transferase</keyword>
<comment type="function">
    <text evidence="3">Responds to activation by environmental stress and pro-inflammatory cytokines by phosphorylating a number of transcription factors, primarily components of AP-1 such as JUN and ATF2 and thus regulates AP-1 transcriptional activity (By similarity). May play a role in the development of the central nervous system during embryogenesis. May play a role in the regulation of the circadian clock (By similarity).</text>
</comment>
<comment type="catalytic activity">
    <reaction>
        <text>L-seryl-[protein] + ATP = O-phospho-L-seryl-[protein] + ADP + H(+)</text>
        <dbReference type="Rhea" id="RHEA:17989"/>
        <dbReference type="Rhea" id="RHEA-COMP:9863"/>
        <dbReference type="Rhea" id="RHEA-COMP:11604"/>
        <dbReference type="ChEBI" id="CHEBI:15378"/>
        <dbReference type="ChEBI" id="CHEBI:29999"/>
        <dbReference type="ChEBI" id="CHEBI:30616"/>
        <dbReference type="ChEBI" id="CHEBI:83421"/>
        <dbReference type="ChEBI" id="CHEBI:456216"/>
        <dbReference type="EC" id="2.7.11.24"/>
    </reaction>
</comment>
<comment type="catalytic activity">
    <reaction>
        <text>L-threonyl-[protein] + ATP = O-phospho-L-threonyl-[protein] + ADP + H(+)</text>
        <dbReference type="Rhea" id="RHEA:46608"/>
        <dbReference type="Rhea" id="RHEA-COMP:11060"/>
        <dbReference type="Rhea" id="RHEA-COMP:11605"/>
        <dbReference type="ChEBI" id="CHEBI:15378"/>
        <dbReference type="ChEBI" id="CHEBI:30013"/>
        <dbReference type="ChEBI" id="CHEBI:30616"/>
        <dbReference type="ChEBI" id="CHEBI:61977"/>
        <dbReference type="ChEBI" id="CHEBI:456216"/>
        <dbReference type="EC" id="2.7.11.24"/>
    </reaction>
</comment>
<comment type="cofactor">
    <cofactor evidence="2">
        <name>Mg(2+)</name>
        <dbReference type="ChEBI" id="CHEBI:18420"/>
    </cofactor>
</comment>
<comment type="activity regulation">
    <text evidence="2">Activated by threonine and tyrosine phosphorylation.</text>
</comment>
<comment type="tissue specificity">
    <text evidence="6">Expressed in the neuroepithelium of developing brain at stages 16 to 26.</text>
</comment>
<comment type="domain">
    <text>The TXY motif contains the threonine and tyrosine residues whose phosphorylation activates the MAP kinases.</text>
</comment>
<comment type="PTM">
    <text evidence="1">Dually phosphorylated on Thr-183 and Tyr-185, which activates the enzyme.</text>
</comment>
<comment type="similarity">
    <text evidence="7">Belongs to the protein kinase superfamily. CMGC Ser/Thr protein kinase family. MAP kinase subfamily.</text>
</comment>
<reference evidence="7" key="1">
    <citation type="journal article" date="1997" name="Biochem. Biophys. Res. Commun.">
        <title>Expression of the JNK2-alpha1 gene in the developing chick brain.</title>
        <authorList>
            <person name="Ishikawa T."/>
            <person name="Nakada-Moriya Y."/>
            <person name="Ando C."/>
            <person name="Tanda N."/>
            <person name="Nishida S."/>
            <person name="Minatogawa Y."/>
            <person name="Nohno T."/>
        </authorList>
    </citation>
    <scope>NUCLEOTIDE SEQUENCE [MRNA]</scope>
    <scope>TISSUE SPECIFICITY</scope>
    <source>
        <tissue>Embryo</tissue>
    </source>
</reference>
<reference key="2">
    <citation type="journal article" date="1997" name="Biochem. Biophys. Res. Commun.">
        <authorList>
            <person name="Ishikawa T."/>
            <person name="Nakada-Moriya Y."/>
            <person name="Ando C."/>
            <person name="Tanda N."/>
            <person name="Nishida S."/>
            <person name="Minatogawa Y."/>
            <person name="Nohno T."/>
        </authorList>
    </citation>
    <scope>ERRATUM OF PUBMED:9177299</scope>
</reference>
<evidence type="ECO:0000250" key="1"/>
<evidence type="ECO:0000250" key="2">
    <source>
        <dbReference type="UniProtKB" id="P45984"/>
    </source>
</evidence>
<evidence type="ECO:0000250" key="3">
    <source>
        <dbReference type="UniProtKB" id="Q9WTU6"/>
    </source>
</evidence>
<evidence type="ECO:0000255" key="4">
    <source>
        <dbReference type="PROSITE-ProRule" id="PRU00159"/>
    </source>
</evidence>
<evidence type="ECO:0000255" key="5">
    <source>
        <dbReference type="PROSITE-ProRule" id="PRU10027"/>
    </source>
</evidence>
<evidence type="ECO:0000269" key="6">
    <source>
    </source>
</evidence>
<evidence type="ECO:0000305" key="7"/>
<evidence type="ECO:0000312" key="8">
    <source>
        <dbReference type="EMBL" id="BAA19188.1"/>
    </source>
</evidence>
<organism evidence="8">
    <name type="scientific">Gallus gallus</name>
    <name type="common">Chicken</name>
    <dbReference type="NCBI Taxonomy" id="9031"/>
    <lineage>
        <taxon>Eukaryota</taxon>
        <taxon>Metazoa</taxon>
        <taxon>Chordata</taxon>
        <taxon>Craniata</taxon>
        <taxon>Vertebrata</taxon>
        <taxon>Euteleostomi</taxon>
        <taxon>Archelosauria</taxon>
        <taxon>Archosauria</taxon>
        <taxon>Dinosauria</taxon>
        <taxon>Saurischia</taxon>
        <taxon>Theropoda</taxon>
        <taxon>Coelurosauria</taxon>
        <taxon>Aves</taxon>
        <taxon>Neognathae</taxon>
        <taxon>Galloanserae</taxon>
        <taxon>Galliformes</taxon>
        <taxon>Phasianidae</taxon>
        <taxon>Phasianinae</taxon>
        <taxon>Gallus</taxon>
    </lineage>
</organism>
<gene>
    <name type="primary">MAPK9</name>
    <name type="synonym">JNK2</name>
</gene>